<sequence length="124" mass="14309">MARLVGVDLPRDKRMEIALTYIYGVGRTRSNEILAATGIDRDLRTRDLTDDQLTHLRDYIEANLKVEGDLRREVQADIRRKIEIGCYQGLRHRRGLPVRGQRTKTNARTRKGPKRTIAGKKKAR</sequence>
<organism>
    <name type="scientific">Mycobacterium avium (strain 104)</name>
    <dbReference type="NCBI Taxonomy" id="243243"/>
    <lineage>
        <taxon>Bacteria</taxon>
        <taxon>Bacillati</taxon>
        <taxon>Actinomycetota</taxon>
        <taxon>Actinomycetes</taxon>
        <taxon>Mycobacteriales</taxon>
        <taxon>Mycobacteriaceae</taxon>
        <taxon>Mycobacterium</taxon>
        <taxon>Mycobacterium avium complex (MAC)</taxon>
    </lineage>
</organism>
<gene>
    <name evidence="1" type="primary">rpsM</name>
    <name type="ordered locus">MAV_4401</name>
</gene>
<comment type="function">
    <text evidence="1">Located at the top of the head of the 30S subunit, it contacts several helices of the 16S rRNA. In the 70S ribosome it contacts the 23S rRNA (bridge B1a) and protein L5 of the 50S subunit (bridge B1b), connecting the 2 subunits; these bridges are implicated in subunit movement. Contacts the tRNAs in the A and P-sites.</text>
</comment>
<comment type="subunit">
    <text evidence="1">Part of the 30S ribosomal subunit. Forms a loose heterodimer with protein S19. Forms two bridges to the 50S subunit in the 70S ribosome.</text>
</comment>
<comment type="similarity">
    <text evidence="1">Belongs to the universal ribosomal protein uS13 family.</text>
</comment>
<comment type="sequence caution" evidence="3">
    <conflict type="erroneous initiation">
        <sequence resource="EMBL-CDS" id="ABK67322"/>
    </conflict>
</comment>
<keyword id="KW-0687">Ribonucleoprotein</keyword>
<keyword id="KW-0689">Ribosomal protein</keyword>
<keyword id="KW-0694">RNA-binding</keyword>
<keyword id="KW-0699">rRNA-binding</keyword>
<keyword id="KW-0820">tRNA-binding</keyword>
<name>RS13_MYCA1</name>
<accession>A0QKU8</accession>
<reference key="1">
    <citation type="submission" date="2006-10" db="EMBL/GenBank/DDBJ databases">
        <authorList>
            <person name="Fleischmann R.D."/>
            <person name="Dodson R.J."/>
            <person name="Haft D.H."/>
            <person name="Merkel J.S."/>
            <person name="Nelson W.C."/>
            <person name="Fraser C.M."/>
        </authorList>
    </citation>
    <scope>NUCLEOTIDE SEQUENCE [LARGE SCALE GENOMIC DNA]</scope>
    <source>
        <strain>104</strain>
    </source>
</reference>
<evidence type="ECO:0000255" key="1">
    <source>
        <dbReference type="HAMAP-Rule" id="MF_01315"/>
    </source>
</evidence>
<evidence type="ECO:0000256" key="2">
    <source>
        <dbReference type="SAM" id="MobiDB-lite"/>
    </source>
</evidence>
<evidence type="ECO:0000305" key="3"/>
<feature type="chain" id="PRO_0000306646" description="Small ribosomal subunit protein uS13">
    <location>
        <begin position="1"/>
        <end position="124"/>
    </location>
</feature>
<feature type="region of interest" description="Disordered" evidence="2">
    <location>
        <begin position="95"/>
        <end position="124"/>
    </location>
</feature>
<protein>
    <recommendedName>
        <fullName evidence="1">Small ribosomal subunit protein uS13</fullName>
    </recommendedName>
    <alternativeName>
        <fullName evidence="3">30S ribosomal protein S13</fullName>
    </alternativeName>
</protein>
<proteinExistence type="inferred from homology"/>
<dbReference type="EMBL" id="CP000479">
    <property type="protein sequence ID" value="ABK67322.1"/>
    <property type="status" value="ALT_INIT"/>
    <property type="molecule type" value="Genomic_DNA"/>
</dbReference>
<dbReference type="RefSeq" id="WP_003873446.1">
    <property type="nucleotide sequence ID" value="NC_008595.1"/>
</dbReference>
<dbReference type="SMR" id="A0QKU8"/>
<dbReference type="GeneID" id="75271915"/>
<dbReference type="KEGG" id="mav:MAV_4401"/>
<dbReference type="HOGENOM" id="CLU_103849_1_2_11"/>
<dbReference type="Proteomes" id="UP000001574">
    <property type="component" value="Chromosome"/>
</dbReference>
<dbReference type="GO" id="GO:0005829">
    <property type="term" value="C:cytosol"/>
    <property type="evidence" value="ECO:0007669"/>
    <property type="project" value="TreeGrafter"/>
</dbReference>
<dbReference type="GO" id="GO:0015935">
    <property type="term" value="C:small ribosomal subunit"/>
    <property type="evidence" value="ECO:0007669"/>
    <property type="project" value="TreeGrafter"/>
</dbReference>
<dbReference type="GO" id="GO:0019843">
    <property type="term" value="F:rRNA binding"/>
    <property type="evidence" value="ECO:0007669"/>
    <property type="project" value="UniProtKB-UniRule"/>
</dbReference>
<dbReference type="GO" id="GO:0003735">
    <property type="term" value="F:structural constituent of ribosome"/>
    <property type="evidence" value="ECO:0007669"/>
    <property type="project" value="InterPro"/>
</dbReference>
<dbReference type="GO" id="GO:0000049">
    <property type="term" value="F:tRNA binding"/>
    <property type="evidence" value="ECO:0007669"/>
    <property type="project" value="UniProtKB-UniRule"/>
</dbReference>
<dbReference type="GO" id="GO:0006412">
    <property type="term" value="P:translation"/>
    <property type="evidence" value="ECO:0007669"/>
    <property type="project" value="UniProtKB-UniRule"/>
</dbReference>
<dbReference type="FunFam" id="1.10.8.50:FF:000001">
    <property type="entry name" value="30S ribosomal protein S13"/>
    <property type="match status" value="1"/>
</dbReference>
<dbReference type="FunFam" id="4.10.910.10:FF:000001">
    <property type="entry name" value="30S ribosomal protein S13"/>
    <property type="match status" value="1"/>
</dbReference>
<dbReference type="Gene3D" id="1.10.8.50">
    <property type="match status" value="1"/>
</dbReference>
<dbReference type="Gene3D" id="4.10.910.10">
    <property type="entry name" value="30s ribosomal protein s13, domain 2"/>
    <property type="match status" value="1"/>
</dbReference>
<dbReference type="HAMAP" id="MF_01315">
    <property type="entry name" value="Ribosomal_uS13"/>
    <property type="match status" value="1"/>
</dbReference>
<dbReference type="InterPro" id="IPR027437">
    <property type="entry name" value="Rbsml_uS13_C"/>
</dbReference>
<dbReference type="InterPro" id="IPR001892">
    <property type="entry name" value="Ribosomal_uS13"/>
</dbReference>
<dbReference type="InterPro" id="IPR010979">
    <property type="entry name" value="Ribosomal_uS13-like_H2TH"/>
</dbReference>
<dbReference type="InterPro" id="IPR019980">
    <property type="entry name" value="Ribosomal_uS13_bac-type"/>
</dbReference>
<dbReference type="InterPro" id="IPR018269">
    <property type="entry name" value="Ribosomal_uS13_CS"/>
</dbReference>
<dbReference type="NCBIfam" id="TIGR03631">
    <property type="entry name" value="uS13_bact"/>
    <property type="match status" value="1"/>
</dbReference>
<dbReference type="PANTHER" id="PTHR10871">
    <property type="entry name" value="30S RIBOSOMAL PROTEIN S13/40S RIBOSOMAL PROTEIN S18"/>
    <property type="match status" value="1"/>
</dbReference>
<dbReference type="PANTHER" id="PTHR10871:SF1">
    <property type="entry name" value="SMALL RIBOSOMAL SUBUNIT PROTEIN US13M"/>
    <property type="match status" value="1"/>
</dbReference>
<dbReference type="Pfam" id="PF00416">
    <property type="entry name" value="Ribosomal_S13"/>
    <property type="match status" value="1"/>
</dbReference>
<dbReference type="PIRSF" id="PIRSF002134">
    <property type="entry name" value="Ribosomal_S13"/>
    <property type="match status" value="1"/>
</dbReference>
<dbReference type="SUPFAM" id="SSF46946">
    <property type="entry name" value="S13-like H2TH domain"/>
    <property type="match status" value="1"/>
</dbReference>
<dbReference type="PROSITE" id="PS00646">
    <property type="entry name" value="RIBOSOMAL_S13_1"/>
    <property type="match status" value="1"/>
</dbReference>
<dbReference type="PROSITE" id="PS50159">
    <property type="entry name" value="RIBOSOMAL_S13_2"/>
    <property type="match status" value="1"/>
</dbReference>